<gene>
    <name evidence="1" type="primary">atpG</name>
    <name type="ordered locus">Smed_2923</name>
</gene>
<comment type="function">
    <text evidence="1">Produces ATP from ADP in the presence of a proton gradient across the membrane. The gamma chain is believed to be important in regulating ATPase activity and the flow of protons through the CF(0) complex.</text>
</comment>
<comment type="subunit">
    <text evidence="1">F-type ATPases have 2 components, CF(1) - the catalytic core - and CF(0) - the membrane proton channel. CF(1) has five subunits: alpha(3), beta(3), gamma(1), delta(1), epsilon(1). CF(0) has three main subunits: a, b and c.</text>
</comment>
<comment type="subcellular location">
    <subcellularLocation>
        <location evidence="1">Cell inner membrane</location>
        <topology evidence="1">Peripheral membrane protein</topology>
    </subcellularLocation>
</comment>
<comment type="similarity">
    <text evidence="1">Belongs to the ATPase gamma chain family.</text>
</comment>
<keyword id="KW-0066">ATP synthesis</keyword>
<keyword id="KW-0997">Cell inner membrane</keyword>
<keyword id="KW-1003">Cell membrane</keyword>
<keyword id="KW-0139">CF(1)</keyword>
<keyword id="KW-0375">Hydrogen ion transport</keyword>
<keyword id="KW-0406">Ion transport</keyword>
<keyword id="KW-0472">Membrane</keyword>
<keyword id="KW-0813">Transport</keyword>
<proteinExistence type="inferred from homology"/>
<name>ATPG_SINMW</name>
<reference key="1">
    <citation type="submission" date="2007-06" db="EMBL/GenBank/DDBJ databases">
        <title>Complete sequence of Sinorhizobium medicae WSM419 chromosome.</title>
        <authorList>
            <consortium name="US DOE Joint Genome Institute"/>
            <person name="Copeland A."/>
            <person name="Lucas S."/>
            <person name="Lapidus A."/>
            <person name="Barry K."/>
            <person name="Glavina del Rio T."/>
            <person name="Dalin E."/>
            <person name="Tice H."/>
            <person name="Pitluck S."/>
            <person name="Chain P."/>
            <person name="Malfatti S."/>
            <person name="Shin M."/>
            <person name="Vergez L."/>
            <person name="Schmutz J."/>
            <person name="Larimer F."/>
            <person name="Land M."/>
            <person name="Hauser L."/>
            <person name="Kyrpides N."/>
            <person name="Mikhailova N."/>
            <person name="Reeve W.G."/>
            <person name="Richardson P."/>
        </authorList>
    </citation>
    <scope>NUCLEOTIDE SEQUENCE [LARGE SCALE GENOMIC DNA]</scope>
    <source>
        <strain>WSM419</strain>
    </source>
</reference>
<dbReference type="EMBL" id="CP000738">
    <property type="protein sequence ID" value="ABR61752.1"/>
    <property type="molecule type" value="Genomic_DNA"/>
</dbReference>
<dbReference type="RefSeq" id="WP_012067134.1">
    <property type="nucleotide sequence ID" value="NC_009636.1"/>
</dbReference>
<dbReference type="RefSeq" id="YP_001328587.1">
    <property type="nucleotide sequence ID" value="NC_009636.1"/>
</dbReference>
<dbReference type="SMR" id="A6UDM2"/>
<dbReference type="STRING" id="366394.Smed_2923"/>
<dbReference type="KEGG" id="smd:Smed_2923"/>
<dbReference type="PATRIC" id="fig|366394.8.peg.6140"/>
<dbReference type="eggNOG" id="COG0224">
    <property type="taxonomic scope" value="Bacteria"/>
</dbReference>
<dbReference type="HOGENOM" id="CLU_050669_0_1_5"/>
<dbReference type="OrthoDB" id="9812769at2"/>
<dbReference type="Proteomes" id="UP000001108">
    <property type="component" value="Chromosome"/>
</dbReference>
<dbReference type="GO" id="GO:0005886">
    <property type="term" value="C:plasma membrane"/>
    <property type="evidence" value="ECO:0007669"/>
    <property type="project" value="UniProtKB-SubCell"/>
</dbReference>
<dbReference type="GO" id="GO:0045259">
    <property type="term" value="C:proton-transporting ATP synthase complex"/>
    <property type="evidence" value="ECO:0007669"/>
    <property type="project" value="UniProtKB-KW"/>
</dbReference>
<dbReference type="GO" id="GO:0005524">
    <property type="term" value="F:ATP binding"/>
    <property type="evidence" value="ECO:0007669"/>
    <property type="project" value="UniProtKB-UniRule"/>
</dbReference>
<dbReference type="GO" id="GO:0046933">
    <property type="term" value="F:proton-transporting ATP synthase activity, rotational mechanism"/>
    <property type="evidence" value="ECO:0007669"/>
    <property type="project" value="UniProtKB-UniRule"/>
</dbReference>
<dbReference type="GO" id="GO:0042777">
    <property type="term" value="P:proton motive force-driven plasma membrane ATP synthesis"/>
    <property type="evidence" value="ECO:0007669"/>
    <property type="project" value="UniProtKB-UniRule"/>
</dbReference>
<dbReference type="CDD" id="cd12151">
    <property type="entry name" value="F1-ATPase_gamma"/>
    <property type="match status" value="1"/>
</dbReference>
<dbReference type="FunFam" id="1.10.287.80:FF:000001">
    <property type="entry name" value="ATP synthase gamma chain"/>
    <property type="match status" value="1"/>
</dbReference>
<dbReference type="FunFam" id="1.10.287.80:FF:000003">
    <property type="entry name" value="ATP synthase gamma chain, chloroplastic"/>
    <property type="match status" value="1"/>
</dbReference>
<dbReference type="Gene3D" id="3.40.1380.10">
    <property type="match status" value="1"/>
</dbReference>
<dbReference type="Gene3D" id="1.10.287.80">
    <property type="entry name" value="ATP synthase, gamma subunit, helix hairpin domain"/>
    <property type="match status" value="1"/>
</dbReference>
<dbReference type="HAMAP" id="MF_00815">
    <property type="entry name" value="ATP_synth_gamma_bact"/>
    <property type="match status" value="1"/>
</dbReference>
<dbReference type="InterPro" id="IPR035968">
    <property type="entry name" value="ATP_synth_F1_ATPase_gsu"/>
</dbReference>
<dbReference type="InterPro" id="IPR000131">
    <property type="entry name" value="ATP_synth_F1_gsu"/>
</dbReference>
<dbReference type="InterPro" id="IPR023632">
    <property type="entry name" value="ATP_synth_F1_gsu_CS"/>
</dbReference>
<dbReference type="NCBIfam" id="TIGR01146">
    <property type="entry name" value="ATPsyn_F1gamma"/>
    <property type="match status" value="1"/>
</dbReference>
<dbReference type="NCBIfam" id="NF004146">
    <property type="entry name" value="PRK05621.1-4"/>
    <property type="match status" value="1"/>
</dbReference>
<dbReference type="PANTHER" id="PTHR11693">
    <property type="entry name" value="ATP SYNTHASE GAMMA CHAIN"/>
    <property type="match status" value="1"/>
</dbReference>
<dbReference type="PANTHER" id="PTHR11693:SF22">
    <property type="entry name" value="ATP SYNTHASE SUBUNIT GAMMA, MITOCHONDRIAL"/>
    <property type="match status" value="1"/>
</dbReference>
<dbReference type="Pfam" id="PF00231">
    <property type="entry name" value="ATP-synt"/>
    <property type="match status" value="1"/>
</dbReference>
<dbReference type="PIRSF" id="PIRSF039089">
    <property type="entry name" value="ATP_synthase_gamma"/>
    <property type="match status" value="1"/>
</dbReference>
<dbReference type="PRINTS" id="PR00126">
    <property type="entry name" value="ATPASEGAMMA"/>
</dbReference>
<dbReference type="SUPFAM" id="SSF52943">
    <property type="entry name" value="ATP synthase (F1-ATPase), gamma subunit"/>
    <property type="match status" value="1"/>
</dbReference>
<dbReference type="PROSITE" id="PS00153">
    <property type="entry name" value="ATPASE_GAMMA"/>
    <property type="match status" value="1"/>
</dbReference>
<organism>
    <name type="scientific">Sinorhizobium medicae (strain WSM419)</name>
    <name type="common">Ensifer medicae</name>
    <dbReference type="NCBI Taxonomy" id="366394"/>
    <lineage>
        <taxon>Bacteria</taxon>
        <taxon>Pseudomonadati</taxon>
        <taxon>Pseudomonadota</taxon>
        <taxon>Alphaproteobacteria</taxon>
        <taxon>Hyphomicrobiales</taxon>
        <taxon>Rhizobiaceae</taxon>
        <taxon>Sinorhizobium/Ensifer group</taxon>
        <taxon>Sinorhizobium</taxon>
    </lineage>
</organism>
<protein>
    <recommendedName>
        <fullName evidence="1">ATP synthase gamma chain</fullName>
    </recommendedName>
    <alternativeName>
        <fullName evidence="1">ATP synthase F1 sector gamma subunit</fullName>
    </alternativeName>
    <alternativeName>
        <fullName evidence="1">F-ATPase gamma subunit</fullName>
    </alternativeName>
</protein>
<accession>A6UDM2</accession>
<sequence length="291" mass="31731">MPSLKDLKNRIASVKATQKITKAMKMVAAAKLRRAQEAAEAARPYSQRMAAVLSNIAQAVGADDSAPRLMTGTGKDDTHLLVVCTAERGLCGGFNSQIARHARDHVRKLLAQGKTVKIICVGKKGFDILRREFASLIIDRVDLREVKKIGFENADRIGHKVIELFDNGEFDVCTLFYSEFKSVISQIPTAQQLIPASAGEAVAEGASAIYEYEPDAAAILSDLIPRNISVQIFRALLENVAGEMGAKMSAMDNATRNAGEMINKLTLNYNRQRQAQITKELIEIISGAEAL</sequence>
<evidence type="ECO:0000255" key="1">
    <source>
        <dbReference type="HAMAP-Rule" id="MF_00815"/>
    </source>
</evidence>
<feature type="chain" id="PRO_1000053340" description="ATP synthase gamma chain">
    <location>
        <begin position="1"/>
        <end position="291"/>
    </location>
</feature>